<dbReference type="EMBL" id="CP000252">
    <property type="protein sequence ID" value="ABC78561.1"/>
    <property type="molecule type" value="Genomic_DNA"/>
</dbReference>
<dbReference type="RefSeq" id="WP_011418580.1">
    <property type="nucleotide sequence ID" value="NC_007759.1"/>
</dbReference>
<dbReference type="SMR" id="Q2LWU9"/>
<dbReference type="FunCoup" id="Q2LWU9">
    <property type="interactions" value="427"/>
</dbReference>
<dbReference type="STRING" id="56780.SYN_01795"/>
<dbReference type="KEGG" id="sat:SYN_01795"/>
<dbReference type="eggNOG" id="COG0216">
    <property type="taxonomic scope" value="Bacteria"/>
</dbReference>
<dbReference type="HOGENOM" id="CLU_036856_0_1_7"/>
<dbReference type="InParanoid" id="Q2LWU9"/>
<dbReference type="OrthoDB" id="9806673at2"/>
<dbReference type="Proteomes" id="UP000001933">
    <property type="component" value="Chromosome"/>
</dbReference>
<dbReference type="GO" id="GO:0005737">
    <property type="term" value="C:cytoplasm"/>
    <property type="evidence" value="ECO:0007669"/>
    <property type="project" value="UniProtKB-SubCell"/>
</dbReference>
<dbReference type="GO" id="GO:0016149">
    <property type="term" value="F:translation release factor activity, codon specific"/>
    <property type="evidence" value="ECO:0007669"/>
    <property type="project" value="UniProtKB-UniRule"/>
</dbReference>
<dbReference type="FunFam" id="3.30.160.20:FF:000004">
    <property type="entry name" value="Peptide chain release factor 1"/>
    <property type="match status" value="1"/>
</dbReference>
<dbReference type="FunFam" id="3.30.70.1660:FF:000002">
    <property type="entry name" value="Peptide chain release factor 1"/>
    <property type="match status" value="1"/>
</dbReference>
<dbReference type="FunFam" id="3.30.70.1660:FF:000004">
    <property type="entry name" value="Peptide chain release factor 1"/>
    <property type="match status" value="1"/>
</dbReference>
<dbReference type="Gene3D" id="3.30.160.20">
    <property type="match status" value="1"/>
</dbReference>
<dbReference type="Gene3D" id="3.30.70.1660">
    <property type="match status" value="2"/>
</dbReference>
<dbReference type="Gene3D" id="6.10.140.1950">
    <property type="match status" value="1"/>
</dbReference>
<dbReference type="HAMAP" id="MF_00093">
    <property type="entry name" value="Rel_fac_1"/>
    <property type="match status" value="1"/>
</dbReference>
<dbReference type="InterPro" id="IPR005139">
    <property type="entry name" value="PCRF"/>
</dbReference>
<dbReference type="InterPro" id="IPR000352">
    <property type="entry name" value="Pep_chain_release_fac_I"/>
</dbReference>
<dbReference type="InterPro" id="IPR045853">
    <property type="entry name" value="Pep_chain_release_fac_I_sf"/>
</dbReference>
<dbReference type="InterPro" id="IPR050057">
    <property type="entry name" value="Prokaryotic/Mito_RF"/>
</dbReference>
<dbReference type="InterPro" id="IPR004373">
    <property type="entry name" value="RF-1"/>
</dbReference>
<dbReference type="NCBIfam" id="TIGR00019">
    <property type="entry name" value="prfA"/>
    <property type="match status" value="1"/>
</dbReference>
<dbReference type="NCBIfam" id="NF001859">
    <property type="entry name" value="PRK00591.1"/>
    <property type="match status" value="1"/>
</dbReference>
<dbReference type="PANTHER" id="PTHR43804">
    <property type="entry name" value="LD18447P"/>
    <property type="match status" value="1"/>
</dbReference>
<dbReference type="PANTHER" id="PTHR43804:SF7">
    <property type="entry name" value="LD18447P"/>
    <property type="match status" value="1"/>
</dbReference>
<dbReference type="Pfam" id="PF03462">
    <property type="entry name" value="PCRF"/>
    <property type="match status" value="1"/>
</dbReference>
<dbReference type="Pfam" id="PF00472">
    <property type="entry name" value="RF-1"/>
    <property type="match status" value="1"/>
</dbReference>
<dbReference type="SMART" id="SM00937">
    <property type="entry name" value="PCRF"/>
    <property type="match status" value="1"/>
</dbReference>
<dbReference type="SUPFAM" id="SSF75620">
    <property type="entry name" value="Release factor"/>
    <property type="match status" value="1"/>
</dbReference>
<dbReference type="PROSITE" id="PS00745">
    <property type="entry name" value="RF_PROK_I"/>
    <property type="match status" value="1"/>
</dbReference>
<gene>
    <name evidence="1" type="primary">prfA</name>
    <name type="ordered locus">SYNAS_26820</name>
    <name type="ORF">SYN_01795</name>
</gene>
<sequence>MFSKLKEVESRYLELEKLLSDPTVVTRQSLYQKYAKEHADLRDLVEVFRKYEKVGAAIEEAQQLLRGDDEELKEIAREELPELRQHLAGLEERLKVLLLPRDLNDDRNVFLEIRAGTGGDEAGLFVGDLFRMYARYAEMRRWKVEVISSTPSSGVGGFKEIIASIAGQGAYSQLKYESGVHRVQRVPVTEAQGRIHTSAVTVAIMPEADEVEVTIDPNDLRIDVFHSSGHGGQSVNTTDSAVRITHLPTGLVVSCQDEKSQLKNKAKALKVLRARLLDIMVKKQSDEISEARKSQVGSGDRSERIRTYNFPQGRVTDHRVGLTLYSLENILGGDIQEFIDALTAYFQAESLKQQSTG</sequence>
<evidence type="ECO:0000255" key="1">
    <source>
        <dbReference type="HAMAP-Rule" id="MF_00093"/>
    </source>
</evidence>
<comment type="function">
    <text evidence="1">Peptide chain release factor 1 directs the termination of translation in response to the peptide chain termination codons UAG and UAA.</text>
</comment>
<comment type="subcellular location">
    <subcellularLocation>
        <location evidence="1">Cytoplasm</location>
    </subcellularLocation>
</comment>
<comment type="PTM">
    <text evidence="1">Methylated by PrmC. Methylation increases the termination efficiency of RF1.</text>
</comment>
<comment type="similarity">
    <text evidence="1">Belongs to the prokaryotic/mitochondrial release factor family.</text>
</comment>
<proteinExistence type="inferred from homology"/>
<organism>
    <name type="scientific">Syntrophus aciditrophicus (strain SB)</name>
    <dbReference type="NCBI Taxonomy" id="56780"/>
    <lineage>
        <taxon>Bacteria</taxon>
        <taxon>Pseudomonadati</taxon>
        <taxon>Thermodesulfobacteriota</taxon>
        <taxon>Syntrophia</taxon>
        <taxon>Syntrophales</taxon>
        <taxon>Syntrophaceae</taxon>
        <taxon>Syntrophus</taxon>
    </lineage>
</organism>
<protein>
    <recommendedName>
        <fullName evidence="1">Peptide chain release factor 1</fullName>
        <shortName evidence="1">RF-1</shortName>
    </recommendedName>
</protein>
<name>RF1_SYNAS</name>
<feature type="chain" id="PRO_0000263380" description="Peptide chain release factor 1">
    <location>
        <begin position="1"/>
        <end position="357"/>
    </location>
</feature>
<feature type="modified residue" description="N5-methylglutamine" evidence="1">
    <location>
        <position position="233"/>
    </location>
</feature>
<keyword id="KW-0963">Cytoplasm</keyword>
<keyword id="KW-0488">Methylation</keyword>
<keyword id="KW-0648">Protein biosynthesis</keyword>
<keyword id="KW-1185">Reference proteome</keyword>
<accession>Q2LWU9</accession>
<reference key="1">
    <citation type="journal article" date="2007" name="Proc. Natl. Acad. Sci. U.S.A.">
        <title>The genome of Syntrophus aciditrophicus: life at the thermodynamic limit of microbial growth.</title>
        <authorList>
            <person name="McInerney M.J."/>
            <person name="Rohlin L."/>
            <person name="Mouttaki H."/>
            <person name="Kim U."/>
            <person name="Krupp R.S."/>
            <person name="Rios-Hernandez L."/>
            <person name="Sieber J."/>
            <person name="Struchtemeyer C.G."/>
            <person name="Bhattacharyya A."/>
            <person name="Campbell J.W."/>
            <person name="Gunsalus R.P."/>
        </authorList>
    </citation>
    <scope>NUCLEOTIDE SEQUENCE [LARGE SCALE GENOMIC DNA]</scope>
    <source>
        <strain>SB</strain>
    </source>
</reference>